<name>VMA21_HUMAN</name>
<keyword id="KW-0025">Alternative splicing</keyword>
<keyword id="KW-0968">Cytoplasmic vesicle</keyword>
<keyword id="KW-0256">Endoplasmic reticulum</keyword>
<keyword id="KW-0472">Membrane</keyword>
<keyword id="KW-1267">Proteomics identification</keyword>
<keyword id="KW-1185">Reference proteome</keyword>
<keyword id="KW-0812">Transmembrane</keyword>
<keyword id="KW-1133">Transmembrane helix</keyword>
<organism>
    <name type="scientific">Homo sapiens</name>
    <name type="common">Human</name>
    <dbReference type="NCBI Taxonomy" id="9606"/>
    <lineage>
        <taxon>Eukaryota</taxon>
        <taxon>Metazoa</taxon>
        <taxon>Chordata</taxon>
        <taxon>Craniata</taxon>
        <taxon>Vertebrata</taxon>
        <taxon>Euteleostomi</taxon>
        <taxon>Mammalia</taxon>
        <taxon>Eutheria</taxon>
        <taxon>Euarchontoglires</taxon>
        <taxon>Primates</taxon>
        <taxon>Haplorrhini</taxon>
        <taxon>Catarrhini</taxon>
        <taxon>Hominidae</taxon>
        <taxon>Homo</taxon>
    </lineage>
</organism>
<proteinExistence type="evidence at protein level"/>
<comment type="function">
    <text evidence="1">Required for the assembly of the V0 complex of the vacuolar ATPase (V-ATPase) in the endoplasmic reticulum.</text>
</comment>
<comment type="subunit">
    <text evidence="6">Associates with the V0 complex of the vacuolar ATPase (V-ATPase) (PubMed:29127204). Interacts with ATP6AP2 (PubMed:29127204).</text>
</comment>
<comment type="interaction">
    <interactant intactId="EBI-1055364">
        <id>Q3ZAQ7</id>
    </interactant>
    <interactant intactId="EBI-348517">
        <id>O95870</id>
        <label>ABHD16A</label>
    </interactant>
    <organismsDiffer>false</organismsDiffer>
    <experiments>3</experiments>
</comment>
<comment type="interaction">
    <interactant intactId="EBI-1055364">
        <id>Q3ZAQ7</id>
    </interactant>
    <interactant intactId="EBI-10225815">
        <id>Q08AM2</id>
        <label>ADAM33</label>
    </interactant>
    <organismsDiffer>false</organismsDiffer>
    <experiments>3</experiments>
</comment>
<comment type="interaction">
    <interactant intactId="EBI-1055364">
        <id>Q3ZAQ7</id>
    </interactant>
    <interactant intactId="EBI-13059134">
        <id>Q13520</id>
        <label>AQP6</label>
    </interactant>
    <organismsDiffer>false</organismsDiffer>
    <experiments>3</experiments>
</comment>
<comment type="interaction">
    <interactant intactId="EBI-1055364">
        <id>Q3ZAQ7</id>
    </interactant>
    <interactant intactId="EBI-714543">
        <id>Q15041</id>
        <label>ARL6IP1</label>
    </interactant>
    <organismsDiffer>false</organismsDiffer>
    <experiments>3</experiments>
</comment>
<comment type="interaction">
    <interactant intactId="EBI-1055364">
        <id>Q3ZAQ7</id>
    </interactant>
    <interactant intactId="EBI-12069500">
        <id>Q9HD20-3</id>
        <label>ATP13A1</label>
    </interactant>
    <organismsDiffer>false</organismsDiffer>
    <experiments>3</experiments>
</comment>
<comment type="interaction">
    <interactant intactId="EBI-1055364">
        <id>Q3ZAQ7</id>
    </interactant>
    <interactant intactId="EBI-3904417">
        <id>Q99437</id>
        <label>ATP6V0B</label>
    </interactant>
    <organismsDiffer>false</organismsDiffer>
    <experiments>3</experiments>
</comment>
<comment type="interaction">
    <interactant intactId="EBI-1055364">
        <id>Q3ZAQ7</id>
    </interactant>
    <interactant intactId="EBI-4402847">
        <id>Q12981</id>
        <label>BNIP1</label>
    </interactant>
    <organismsDiffer>false</organismsDiffer>
    <experiments>3</experiments>
</comment>
<comment type="interaction">
    <interactant intactId="EBI-1055364">
        <id>Q3ZAQ7</id>
    </interactant>
    <interactant intactId="EBI-358858">
        <id>O14735</id>
        <label>CDIPT</label>
    </interactant>
    <organismsDiffer>false</organismsDiffer>
    <experiments>3</experiments>
</comment>
<comment type="interaction">
    <interactant intactId="EBI-1055364">
        <id>Q3ZAQ7</id>
    </interactant>
    <interactant intactId="EBI-12811991">
        <id>Q2HXU8-2</id>
        <label>CLEC12B</label>
    </interactant>
    <organismsDiffer>false</organismsDiffer>
    <experiments>3</experiments>
</comment>
<comment type="interaction">
    <interactant intactId="EBI-1055364">
        <id>Q3ZAQ7</id>
    </interactant>
    <interactant intactId="EBI-12808806">
        <id>Q9Y4D2</id>
        <label>DAGLA</label>
    </interactant>
    <organismsDiffer>false</organismsDiffer>
    <experiments>3</experiments>
</comment>
<comment type="interaction">
    <interactant intactId="EBI-1055364">
        <id>Q3ZAQ7</id>
    </interactant>
    <interactant intactId="EBI-712096">
        <id>P30519</id>
        <label>HMOX2</label>
    </interactant>
    <organismsDiffer>false</organismsDiffer>
    <experiments>3</experiments>
</comment>
<comment type="interaction">
    <interactant intactId="EBI-1055364">
        <id>Q3ZAQ7</id>
    </interactant>
    <interactant intactId="EBI-8503746">
        <id>Q9Y5U4</id>
        <label>INSIG2</label>
    </interactant>
    <organismsDiffer>false</organismsDiffer>
    <experiments>3</experiments>
</comment>
<comment type="interaction">
    <interactant intactId="EBI-1055364">
        <id>Q3ZAQ7</id>
    </interactant>
    <interactant intactId="EBI-2820517">
        <id>Q8TAF8</id>
        <label>LHFPL5</label>
    </interactant>
    <organismsDiffer>false</organismsDiffer>
    <experiments>3</experiments>
</comment>
<comment type="interaction">
    <interactant intactId="EBI-1055364">
        <id>Q3ZAQ7</id>
    </interactant>
    <interactant intactId="EBI-10317425">
        <id>Q9NZG7</id>
        <label>NINJ2</label>
    </interactant>
    <organismsDiffer>false</organismsDiffer>
    <experiments>3</experiments>
</comment>
<comment type="interaction">
    <interactant intactId="EBI-1055364">
        <id>Q3ZAQ7</id>
    </interactant>
    <interactant intactId="EBI-10252783">
        <id>Q6P499</id>
        <label>NIPAL3</label>
    </interactant>
    <organismsDiffer>false</organismsDiffer>
    <experiments>3</experiments>
</comment>
<comment type="interaction">
    <interactant intactId="EBI-1055364">
        <id>Q3ZAQ7</id>
    </interactant>
    <interactant intactId="EBI-1054848">
        <id>Q9P0S3</id>
        <label>ORMDL1</label>
    </interactant>
    <organismsDiffer>false</organismsDiffer>
    <experiments>3</experiments>
</comment>
<comment type="interaction">
    <interactant intactId="EBI-1055364">
        <id>Q3ZAQ7</id>
    </interactant>
    <interactant intactId="EBI-3919291">
        <id>Q9Y342</id>
        <label>PLLP</label>
    </interactant>
    <organismsDiffer>false</organismsDiffer>
    <experiments>3</experiments>
</comment>
<comment type="interaction">
    <interactant intactId="EBI-1055364">
        <id>Q3ZAQ7</id>
    </interactant>
    <interactant intactId="EBI-10244780">
        <id>Q5QGT7</id>
        <label>RTP2</label>
    </interactant>
    <organismsDiffer>false</organismsDiffer>
    <experiments>3</experiments>
</comment>
<comment type="interaction">
    <interactant intactId="EBI-1055364">
        <id>Q3ZAQ7</id>
    </interactant>
    <interactant intactId="EBI-2684237">
        <id>O00767</id>
        <label>SCD</label>
    </interactant>
    <organismsDiffer>false</organismsDiffer>
    <experiments>3</experiments>
</comment>
<comment type="interaction">
    <interactant intactId="EBI-1055364">
        <id>Q3ZAQ7</id>
    </interactant>
    <interactant intactId="EBI-10281975">
        <id>Q96AG3</id>
        <label>SLC25A46</label>
    </interactant>
    <organismsDiffer>false</organismsDiffer>
    <experiments>3</experiments>
</comment>
<comment type="interaction">
    <interactant intactId="EBI-1055364">
        <id>Q3ZAQ7</id>
    </interactant>
    <interactant intactId="EBI-12867720">
        <id>Q6ICL7</id>
        <label>SLC35E4</label>
    </interactant>
    <organismsDiffer>false</organismsDiffer>
    <experiments>3</experiments>
</comment>
<comment type="interaction">
    <interactant intactId="EBI-1055364">
        <id>Q3ZAQ7</id>
    </interactant>
    <interactant intactId="EBI-2877718">
        <id>Q9NZ01</id>
        <label>TECR</label>
    </interactant>
    <organismsDiffer>false</organismsDiffer>
    <experiments>3</experiments>
</comment>
<comment type="interaction">
    <interactant intactId="EBI-1055364">
        <id>Q3ZAQ7</id>
    </interactant>
    <interactant intactId="EBI-310962">
        <id>Q9UPZ6</id>
        <label>THSD7A</label>
    </interactant>
    <organismsDiffer>false</organismsDiffer>
    <experiments>3</experiments>
</comment>
<comment type="interaction">
    <interactant intactId="EBI-1055364">
        <id>Q3ZAQ7</id>
    </interactant>
    <interactant intactId="EBI-12845616">
        <id>Q6UX40</id>
        <label>TMEM107</label>
    </interactant>
    <organismsDiffer>false</organismsDiffer>
    <experiments>3</experiments>
</comment>
<comment type="interaction">
    <interactant intactId="EBI-1055364">
        <id>Q3ZAQ7</id>
    </interactant>
    <interactant intactId="EBI-2852148">
        <id>Q9H2L4</id>
        <label>TMEM60</label>
    </interactant>
    <organismsDiffer>false</organismsDiffer>
    <experiments>3</experiments>
</comment>
<comment type="interaction">
    <interactant intactId="EBI-1055364">
        <id>Q3ZAQ7</id>
    </interactant>
    <interactant intactId="EBI-520113">
        <id>P63027</id>
        <label>VAMP2</label>
    </interactant>
    <organismsDiffer>false</organismsDiffer>
    <experiments>3</experiments>
</comment>
<comment type="interaction">
    <interactant intactId="EBI-1055364">
        <id>Q3ZAQ7</id>
    </interactant>
    <interactant intactId="EBI-2799703">
        <id>O95070</id>
        <label>YIF1A</label>
    </interactant>
    <organismsDiffer>false</organismsDiffer>
    <experiments>3</experiments>
</comment>
<comment type="interaction">
    <interactant intactId="EBI-1055364">
        <id>Q3ZAQ7</id>
    </interactant>
    <interactant intactId="EBI-7850136">
        <id>Q9Y548</id>
        <label>YIPF1</label>
    </interactant>
    <organismsDiffer>false</organismsDiffer>
    <experiments>3</experiments>
</comment>
<comment type="subcellular location">
    <subcellularLocation>
        <location evidence="1 3">Endoplasmic reticulum membrane</location>
        <topology evidence="1">Multi-pass membrane protein</topology>
    </subcellularLocation>
    <subcellularLocation>
        <location evidence="1 3">Endoplasmic reticulum-Golgi intermediate compartment membrane</location>
        <topology evidence="1">Multi-pass membrane protein</topology>
    </subcellularLocation>
    <subcellularLocation>
        <location evidence="1 2 3">Cytoplasmic vesicle</location>
        <location evidence="1 2 3">COPII-coated vesicle membrane</location>
        <topology evidence="1">Multi-pass membrane protein</topology>
    </subcellularLocation>
</comment>
<comment type="alternative products">
    <event type="alternative splicing"/>
    <isoform>
        <id>Q3ZAQ7-1</id>
        <name>1</name>
        <sequence type="displayed"/>
    </isoform>
    <isoform>
        <id>Q3ZAQ7-2</id>
        <name>2</name>
        <sequence type="described" ref="VSP_041257"/>
    </isoform>
</comment>
<comment type="disease" evidence="3 4 5">
    <disease id="DI-02454">
        <name>Myopathy, X-linked, with excessive autophagy</name>
        <acronym>MEAX</acronym>
        <description>A muscle disorder characterized by childhood early onset of a slowly progressive proximal limb muscle weakness (especially in legs) and elevation of serum creatine kinase, without evidence of cardiac, respiratory or central nervous system involvement. Histopathological analysis reveals diseased muscle fibers that are not necrotic, but show abnormal autophagic vacuolation as a manifestation of excessive autophagic activity in skeletal muscle cells.</description>
        <dbReference type="MIM" id="310440"/>
    </disease>
    <text evidence="3">The disease is caused by variants affecting the gene represented in this entry. VMA21 deficiency results in an increase of lysosomal pH from 4.7 to 5.2, which reduces lysosomal degradative ability and blocks autophagy. This reduces cellular free amino acids, which up-regulates the mTOR pathway and mTOR-dependent macroautophagy, resulting in proliferation of large and ineffective autolysosomes that engulf sections of cytoplasm, merge together, and vacuolate the cell.</text>
</comment>
<comment type="similarity">
    <text evidence="1">Belongs to the VMA21 family.</text>
</comment>
<comment type="caution">
    <text evidence="8 9">Protein characterization data are from PubMed:19379691. Due to a number of errors in the figure panels, the article has been retracted but the authors stand by the validity of the main results and conclusions (PubMed:20873370).</text>
</comment>
<feature type="chain" id="PRO_0000331499" description="Vacuolar ATPase assembly integral membrane protein VMA21">
    <location>
        <begin position="1"/>
        <end position="101"/>
    </location>
</feature>
<feature type="topological domain" description="Cytoplasmic" evidence="1">
    <location>
        <begin position="1"/>
        <end position="25"/>
    </location>
</feature>
<feature type="transmembrane region" description="Helical" evidence="1">
    <location>
        <begin position="26"/>
        <end position="46"/>
    </location>
</feature>
<feature type="topological domain" description="Lumenal" evidence="1">
    <location>
        <begin position="47"/>
        <end position="65"/>
    </location>
</feature>
<feature type="transmembrane region" description="Helical" evidence="1">
    <location>
        <begin position="66"/>
        <end position="86"/>
    </location>
</feature>
<feature type="topological domain" description="Cytoplasmic" evidence="1">
    <location>
        <begin position="87"/>
        <end position="101"/>
    </location>
</feature>
<feature type="splice variant" id="VSP_041257" description="In isoform 2." evidence="7">
    <original>MERPDKAALNALQPPEF</original>
    <variation>MLGSPCGPQLSDRDADEDQCSREFRGRRSRRPPRRTMLRGKSRLNVEWLGYSPGLLLEHRPLLAGRTPRSHR</variation>
    <location>
        <begin position="1"/>
        <end position="17"/>
    </location>
</feature>
<accession>Q3ZAQ7</accession>
<accession>A6NKV7</accession>
<accession>B3KUA9</accession>
<gene>
    <name evidence="1" type="primary">VMA21</name>
    <name type="synonym">MEAX</name>
    <name type="synonym">XMEA</name>
</gene>
<reference key="1">
    <citation type="journal article" date="2004" name="Nat. Genet.">
        <title>Complete sequencing and characterization of 21,243 full-length human cDNAs.</title>
        <authorList>
            <person name="Ota T."/>
            <person name="Suzuki Y."/>
            <person name="Nishikawa T."/>
            <person name="Otsuki T."/>
            <person name="Sugiyama T."/>
            <person name="Irie R."/>
            <person name="Wakamatsu A."/>
            <person name="Hayashi K."/>
            <person name="Sato H."/>
            <person name="Nagai K."/>
            <person name="Kimura K."/>
            <person name="Makita H."/>
            <person name="Sekine M."/>
            <person name="Obayashi M."/>
            <person name="Nishi T."/>
            <person name="Shibahara T."/>
            <person name="Tanaka T."/>
            <person name="Ishii S."/>
            <person name="Yamamoto J."/>
            <person name="Saito K."/>
            <person name="Kawai Y."/>
            <person name="Isono Y."/>
            <person name="Nakamura Y."/>
            <person name="Nagahari K."/>
            <person name="Murakami K."/>
            <person name="Yasuda T."/>
            <person name="Iwayanagi T."/>
            <person name="Wagatsuma M."/>
            <person name="Shiratori A."/>
            <person name="Sudo H."/>
            <person name="Hosoiri T."/>
            <person name="Kaku Y."/>
            <person name="Kodaira H."/>
            <person name="Kondo H."/>
            <person name="Sugawara M."/>
            <person name="Takahashi M."/>
            <person name="Kanda K."/>
            <person name="Yokoi T."/>
            <person name="Furuya T."/>
            <person name="Kikkawa E."/>
            <person name="Omura Y."/>
            <person name="Abe K."/>
            <person name="Kamihara K."/>
            <person name="Katsuta N."/>
            <person name="Sato K."/>
            <person name="Tanikawa M."/>
            <person name="Yamazaki M."/>
            <person name="Ninomiya K."/>
            <person name="Ishibashi T."/>
            <person name="Yamashita H."/>
            <person name="Murakawa K."/>
            <person name="Fujimori K."/>
            <person name="Tanai H."/>
            <person name="Kimata M."/>
            <person name="Watanabe M."/>
            <person name="Hiraoka S."/>
            <person name="Chiba Y."/>
            <person name="Ishida S."/>
            <person name="Ono Y."/>
            <person name="Takiguchi S."/>
            <person name="Watanabe S."/>
            <person name="Yosida M."/>
            <person name="Hotuta T."/>
            <person name="Kusano J."/>
            <person name="Kanehori K."/>
            <person name="Takahashi-Fujii A."/>
            <person name="Hara H."/>
            <person name="Tanase T.-O."/>
            <person name="Nomura Y."/>
            <person name="Togiya S."/>
            <person name="Komai F."/>
            <person name="Hara R."/>
            <person name="Takeuchi K."/>
            <person name="Arita M."/>
            <person name="Imose N."/>
            <person name="Musashino K."/>
            <person name="Yuuki H."/>
            <person name="Oshima A."/>
            <person name="Sasaki N."/>
            <person name="Aotsuka S."/>
            <person name="Yoshikawa Y."/>
            <person name="Matsunawa H."/>
            <person name="Ichihara T."/>
            <person name="Shiohata N."/>
            <person name="Sano S."/>
            <person name="Moriya S."/>
            <person name="Momiyama H."/>
            <person name="Satoh N."/>
            <person name="Takami S."/>
            <person name="Terashima Y."/>
            <person name="Suzuki O."/>
            <person name="Nakagawa S."/>
            <person name="Senoh A."/>
            <person name="Mizoguchi H."/>
            <person name="Goto Y."/>
            <person name="Shimizu F."/>
            <person name="Wakebe H."/>
            <person name="Hishigaki H."/>
            <person name="Watanabe T."/>
            <person name="Sugiyama A."/>
            <person name="Takemoto M."/>
            <person name="Kawakami B."/>
            <person name="Yamazaki M."/>
            <person name="Watanabe K."/>
            <person name="Kumagai A."/>
            <person name="Itakura S."/>
            <person name="Fukuzumi Y."/>
            <person name="Fujimori Y."/>
            <person name="Komiyama M."/>
            <person name="Tashiro H."/>
            <person name="Tanigami A."/>
            <person name="Fujiwara T."/>
            <person name="Ono T."/>
            <person name="Yamada K."/>
            <person name="Fujii Y."/>
            <person name="Ozaki K."/>
            <person name="Hirao M."/>
            <person name="Ohmori Y."/>
            <person name="Kawabata A."/>
            <person name="Hikiji T."/>
            <person name="Kobatake N."/>
            <person name="Inagaki H."/>
            <person name="Ikema Y."/>
            <person name="Okamoto S."/>
            <person name="Okitani R."/>
            <person name="Kawakami T."/>
            <person name="Noguchi S."/>
            <person name="Itoh T."/>
            <person name="Shigeta K."/>
            <person name="Senba T."/>
            <person name="Matsumura K."/>
            <person name="Nakajima Y."/>
            <person name="Mizuno T."/>
            <person name="Morinaga M."/>
            <person name="Sasaki M."/>
            <person name="Togashi T."/>
            <person name="Oyama M."/>
            <person name="Hata H."/>
            <person name="Watanabe M."/>
            <person name="Komatsu T."/>
            <person name="Mizushima-Sugano J."/>
            <person name="Satoh T."/>
            <person name="Shirai Y."/>
            <person name="Takahashi Y."/>
            <person name="Nakagawa K."/>
            <person name="Okumura K."/>
            <person name="Nagase T."/>
            <person name="Nomura N."/>
            <person name="Kikuchi H."/>
            <person name="Masuho Y."/>
            <person name="Yamashita R."/>
            <person name="Nakai K."/>
            <person name="Yada T."/>
            <person name="Nakamura Y."/>
            <person name="Ohara O."/>
            <person name="Isogai T."/>
            <person name="Sugano S."/>
        </authorList>
    </citation>
    <scope>NUCLEOTIDE SEQUENCE [LARGE SCALE MRNA] (ISOFORM 1)</scope>
</reference>
<reference key="2">
    <citation type="journal article" date="2005" name="Nature">
        <title>The DNA sequence of the human X chromosome.</title>
        <authorList>
            <person name="Ross M.T."/>
            <person name="Grafham D.V."/>
            <person name="Coffey A.J."/>
            <person name="Scherer S."/>
            <person name="McLay K."/>
            <person name="Muzny D."/>
            <person name="Platzer M."/>
            <person name="Howell G.R."/>
            <person name="Burrows C."/>
            <person name="Bird C.P."/>
            <person name="Frankish A."/>
            <person name="Lovell F.L."/>
            <person name="Howe K.L."/>
            <person name="Ashurst J.L."/>
            <person name="Fulton R.S."/>
            <person name="Sudbrak R."/>
            <person name="Wen G."/>
            <person name="Jones M.C."/>
            <person name="Hurles M.E."/>
            <person name="Andrews T.D."/>
            <person name="Scott C.E."/>
            <person name="Searle S."/>
            <person name="Ramser J."/>
            <person name="Whittaker A."/>
            <person name="Deadman R."/>
            <person name="Carter N.P."/>
            <person name="Hunt S.E."/>
            <person name="Chen R."/>
            <person name="Cree A."/>
            <person name="Gunaratne P."/>
            <person name="Havlak P."/>
            <person name="Hodgson A."/>
            <person name="Metzker M.L."/>
            <person name="Richards S."/>
            <person name="Scott G."/>
            <person name="Steffen D."/>
            <person name="Sodergren E."/>
            <person name="Wheeler D.A."/>
            <person name="Worley K.C."/>
            <person name="Ainscough R."/>
            <person name="Ambrose K.D."/>
            <person name="Ansari-Lari M.A."/>
            <person name="Aradhya S."/>
            <person name="Ashwell R.I."/>
            <person name="Babbage A.K."/>
            <person name="Bagguley C.L."/>
            <person name="Ballabio A."/>
            <person name="Banerjee R."/>
            <person name="Barker G.E."/>
            <person name="Barlow K.F."/>
            <person name="Barrett I.P."/>
            <person name="Bates K.N."/>
            <person name="Beare D.M."/>
            <person name="Beasley H."/>
            <person name="Beasley O."/>
            <person name="Beck A."/>
            <person name="Bethel G."/>
            <person name="Blechschmidt K."/>
            <person name="Brady N."/>
            <person name="Bray-Allen S."/>
            <person name="Bridgeman A.M."/>
            <person name="Brown A.J."/>
            <person name="Brown M.J."/>
            <person name="Bonnin D."/>
            <person name="Bruford E.A."/>
            <person name="Buhay C."/>
            <person name="Burch P."/>
            <person name="Burford D."/>
            <person name="Burgess J."/>
            <person name="Burrill W."/>
            <person name="Burton J."/>
            <person name="Bye J.M."/>
            <person name="Carder C."/>
            <person name="Carrel L."/>
            <person name="Chako J."/>
            <person name="Chapman J.C."/>
            <person name="Chavez D."/>
            <person name="Chen E."/>
            <person name="Chen G."/>
            <person name="Chen Y."/>
            <person name="Chen Z."/>
            <person name="Chinault C."/>
            <person name="Ciccodicola A."/>
            <person name="Clark S.Y."/>
            <person name="Clarke G."/>
            <person name="Clee C.M."/>
            <person name="Clegg S."/>
            <person name="Clerc-Blankenburg K."/>
            <person name="Clifford K."/>
            <person name="Cobley V."/>
            <person name="Cole C.G."/>
            <person name="Conquer J.S."/>
            <person name="Corby N."/>
            <person name="Connor R.E."/>
            <person name="David R."/>
            <person name="Davies J."/>
            <person name="Davis C."/>
            <person name="Davis J."/>
            <person name="Delgado O."/>
            <person name="Deshazo D."/>
            <person name="Dhami P."/>
            <person name="Ding Y."/>
            <person name="Dinh H."/>
            <person name="Dodsworth S."/>
            <person name="Draper H."/>
            <person name="Dugan-Rocha S."/>
            <person name="Dunham A."/>
            <person name="Dunn M."/>
            <person name="Durbin K.J."/>
            <person name="Dutta I."/>
            <person name="Eades T."/>
            <person name="Ellwood M."/>
            <person name="Emery-Cohen A."/>
            <person name="Errington H."/>
            <person name="Evans K.L."/>
            <person name="Faulkner L."/>
            <person name="Francis F."/>
            <person name="Frankland J."/>
            <person name="Fraser A.E."/>
            <person name="Galgoczy P."/>
            <person name="Gilbert J."/>
            <person name="Gill R."/>
            <person name="Gloeckner G."/>
            <person name="Gregory S.G."/>
            <person name="Gribble S."/>
            <person name="Griffiths C."/>
            <person name="Grocock R."/>
            <person name="Gu Y."/>
            <person name="Gwilliam R."/>
            <person name="Hamilton C."/>
            <person name="Hart E.A."/>
            <person name="Hawes A."/>
            <person name="Heath P.D."/>
            <person name="Heitmann K."/>
            <person name="Hennig S."/>
            <person name="Hernandez J."/>
            <person name="Hinzmann B."/>
            <person name="Ho S."/>
            <person name="Hoffs M."/>
            <person name="Howden P.J."/>
            <person name="Huckle E.J."/>
            <person name="Hume J."/>
            <person name="Hunt P.J."/>
            <person name="Hunt A.R."/>
            <person name="Isherwood J."/>
            <person name="Jacob L."/>
            <person name="Johnson D."/>
            <person name="Jones S."/>
            <person name="de Jong P.J."/>
            <person name="Joseph S.S."/>
            <person name="Keenan S."/>
            <person name="Kelly S."/>
            <person name="Kershaw J.K."/>
            <person name="Khan Z."/>
            <person name="Kioschis P."/>
            <person name="Klages S."/>
            <person name="Knights A.J."/>
            <person name="Kosiura A."/>
            <person name="Kovar-Smith C."/>
            <person name="Laird G.K."/>
            <person name="Langford C."/>
            <person name="Lawlor S."/>
            <person name="Leversha M."/>
            <person name="Lewis L."/>
            <person name="Liu W."/>
            <person name="Lloyd C."/>
            <person name="Lloyd D.M."/>
            <person name="Loulseged H."/>
            <person name="Loveland J.E."/>
            <person name="Lovell J.D."/>
            <person name="Lozado R."/>
            <person name="Lu J."/>
            <person name="Lyne R."/>
            <person name="Ma J."/>
            <person name="Maheshwari M."/>
            <person name="Matthews L.H."/>
            <person name="McDowall J."/>
            <person name="McLaren S."/>
            <person name="McMurray A."/>
            <person name="Meidl P."/>
            <person name="Meitinger T."/>
            <person name="Milne S."/>
            <person name="Miner G."/>
            <person name="Mistry S.L."/>
            <person name="Morgan M."/>
            <person name="Morris S."/>
            <person name="Mueller I."/>
            <person name="Mullikin J.C."/>
            <person name="Nguyen N."/>
            <person name="Nordsiek G."/>
            <person name="Nyakatura G."/>
            <person name="O'dell C.N."/>
            <person name="Okwuonu G."/>
            <person name="Palmer S."/>
            <person name="Pandian R."/>
            <person name="Parker D."/>
            <person name="Parrish J."/>
            <person name="Pasternak S."/>
            <person name="Patel D."/>
            <person name="Pearce A.V."/>
            <person name="Pearson D.M."/>
            <person name="Pelan S.E."/>
            <person name="Perez L."/>
            <person name="Porter K.M."/>
            <person name="Ramsey Y."/>
            <person name="Reichwald K."/>
            <person name="Rhodes S."/>
            <person name="Ridler K.A."/>
            <person name="Schlessinger D."/>
            <person name="Schueler M.G."/>
            <person name="Sehra H.K."/>
            <person name="Shaw-Smith C."/>
            <person name="Shen H."/>
            <person name="Sheridan E.M."/>
            <person name="Shownkeen R."/>
            <person name="Skuce C.D."/>
            <person name="Smith M.L."/>
            <person name="Sotheran E.C."/>
            <person name="Steingruber H.E."/>
            <person name="Steward C.A."/>
            <person name="Storey R."/>
            <person name="Swann R.M."/>
            <person name="Swarbreck D."/>
            <person name="Tabor P.E."/>
            <person name="Taudien S."/>
            <person name="Taylor T."/>
            <person name="Teague B."/>
            <person name="Thomas K."/>
            <person name="Thorpe A."/>
            <person name="Timms K."/>
            <person name="Tracey A."/>
            <person name="Trevanion S."/>
            <person name="Tromans A.C."/>
            <person name="d'Urso M."/>
            <person name="Verduzco D."/>
            <person name="Villasana D."/>
            <person name="Waldron L."/>
            <person name="Wall M."/>
            <person name="Wang Q."/>
            <person name="Warren J."/>
            <person name="Warry G.L."/>
            <person name="Wei X."/>
            <person name="West A."/>
            <person name="Whitehead S.L."/>
            <person name="Whiteley M.N."/>
            <person name="Wilkinson J.E."/>
            <person name="Willey D.L."/>
            <person name="Williams G."/>
            <person name="Williams L."/>
            <person name="Williamson A."/>
            <person name="Williamson H."/>
            <person name="Wilming L."/>
            <person name="Woodmansey R.L."/>
            <person name="Wray P.W."/>
            <person name="Yen J."/>
            <person name="Zhang J."/>
            <person name="Zhou J."/>
            <person name="Zoghbi H."/>
            <person name="Zorilla S."/>
            <person name="Buck D."/>
            <person name="Reinhardt R."/>
            <person name="Poustka A."/>
            <person name="Rosenthal A."/>
            <person name="Lehrach H."/>
            <person name="Meindl A."/>
            <person name="Minx P.J."/>
            <person name="Hillier L.W."/>
            <person name="Willard H.F."/>
            <person name="Wilson R.K."/>
            <person name="Waterston R.H."/>
            <person name="Rice C.M."/>
            <person name="Vaudin M."/>
            <person name="Coulson A."/>
            <person name="Nelson D.L."/>
            <person name="Weinstock G."/>
            <person name="Sulston J.E."/>
            <person name="Durbin R.M."/>
            <person name="Hubbard T."/>
            <person name="Gibbs R.A."/>
            <person name="Beck S."/>
            <person name="Rogers J."/>
            <person name="Bentley D.R."/>
        </authorList>
    </citation>
    <scope>NUCLEOTIDE SEQUENCE [LARGE SCALE GENOMIC DNA]</scope>
</reference>
<reference key="3">
    <citation type="journal article" date="2004" name="Genome Res.">
        <title>The status, quality, and expansion of the NIH full-length cDNA project: the Mammalian Gene Collection (MGC).</title>
        <authorList>
            <consortium name="The MGC Project Team"/>
        </authorList>
    </citation>
    <scope>NUCLEOTIDE SEQUENCE [LARGE SCALE MRNA] (ISOFORM 1)</scope>
    <source>
        <tissue>Testis carcinoma</tissue>
    </source>
</reference>
<reference key="4">
    <citation type="journal article" date="2009" name="Cell">
        <title>VMA21 deficiency causes an autophagic myopathy by compromising V-ATPase activity and lysosomal acidification.</title>
        <authorList>
            <person name="Ramachandran N."/>
            <person name="Munteanu I."/>
            <person name="Wang P."/>
            <person name="Aubourg P."/>
            <person name="Rilstone J.J."/>
            <person name="Israelian N."/>
            <person name="Naranian T."/>
            <person name="Paroutis P."/>
            <person name="Guo R."/>
            <person name="Ren Z.-P."/>
            <person name="Nishino I."/>
            <person name="Chabrol B."/>
            <person name="Pellissier J.-F."/>
            <person name="Minetti C."/>
            <person name="Udd B."/>
            <person name="Fardeau M."/>
            <person name="Tailor C.S."/>
            <person name="Mahuran D.J."/>
            <person name="Kissel J.T."/>
            <person name="Kalimo H."/>
            <person name="Levy N."/>
            <person name="Manolson M.F."/>
            <person name="Ackerley C.A."/>
            <person name="Minassian B.A."/>
        </authorList>
    </citation>
    <scope>RETRACTED PAPER</scope>
</reference>
<reference key="5">
    <citation type="journal article" date="2010" name="Cell">
        <authorList>
            <person name="Ramachandran N."/>
            <person name="Munteanu I."/>
            <person name="Wang P."/>
            <person name="Aubourg P."/>
            <person name="Rilstone J.J."/>
            <person name="Israelian N."/>
            <person name="Naranian T."/>
            <person name="Paroutis P."/>
            <person name="Guo R."/>
            <person name="Ren Z.-P."/>
            <person name="Nishino I."/>
            <person name="Chabrol B."/>
            <person name="Pellissier J.-F."/>
            <person name="Minetti C."/>
            <person name="Udd B."/>
            <person name="Fardeau M."/>
            <person name="Tailor C.S."/>
            <person name="Mahuran D.J."/>
            <person name="Kissel J.T."/>
            <person name="Kalimo H."/>
            <person name="Levy N."/>
            <person name="Manolson M.F."/>
            <person name="Ackerley C.A."/>
            <person name="Minassian B.A."/>
        </authorList>
    </citation>
    <scope>ERRATUM OF PUBMED:19379691</scope>
    <scope>RETRACTION NOTICE OF PUBMED:19379691</scope>
</reference>
<reference key="6">
    <citation type="journal article" date="2011" name="BMC Syst. Biol.">
        <title>Initial characterization of the human central proteome.</title>
        <authorList>
            <person name="Burkard T.R."/>
            <person name="Planyavsky M."/>
            <person name="Kaupe I."/>
            <person name="Breitwieser F.P."/>
            <person name="Buerckstuemmer T."/>
            <person name="Bennett K.L."/>
            <person name="Superti-Furga G."/>
            <person name="Colinge J."/>
        </authorList>
    </citation>
    <scope>IDENTIFICATION BY MASS SPECTROMETRY [LARGE SCALE ANALYSIS]</scope>
</reference>
<reference key="7">
    <citation type="journal article" date="2013" name="Acta Neuropathol.">
        <title>VMA21 deficiency prevents vacuolar ATPase assembly and causes autophagic vacuolar myopathy.</title>
        <authorList>
            <person name="Ramachandran N."/>
            <person name="Munteanu I."/>
            <person name="Wang P."/>
            <person name="Ruggieri A."/>
            <person name="Rilstone J.J."/>
            <person name="Israelian N."/>
            <person name="Naranian T."/>
            <person name="Paroutis P."/>
            <person name="Guo R."/>
            <person name="Ren Z.P."/>
            <person name="Nishino I."/>
            <person name="Chabrol B."/>
            <person name="Pellissier J.F."/>
            <person name="Minetti C."/>
            <person name="Udd B."/>
            <person name="Fardeau M."/>
            <person name="Tailor C.S."/>
            <person name="Mahuran D.J."/>
            <person name="Kissel J.T."/>
            <person name="Kalimo H."/>
            <person name="Levy N."/>
            <person name="Manolson M.F."/>
            <person name="Ackerley C.A."/>
            <person name="Minassian B.A."/>
        </authorList>
    </citation>
    <scope>INVOLVEMENT IN MEAX</scope>
    <scope>SUBCELLULAR LOCATION</scope>
</reference>
<reference key="8">
    <citation type="journal article" date="2014" name="Muscle Nerve">
        <title>Late adult-onset of X-linked myopathy with excessive autophagy.</title>
        <authorList>
            <person name="Crockett C.D."/>
            <person name="Ruggieri A."/>
            <person name="Gujrati M."/>
            <person name="Zallek C.M."/>
            <person name="Ramachandran N."/>
            <person name="Minassian B.A."/>
            <person name="Moore S.A."/>
        </authorList>
    </citation>
    <scope>INVOLVEMENT IN MEAX</scope>
</reference>
<reference key="9">
    <citation type="journal article" date="2015" name="Neuromuscul. Disord.">
        <title>Non-coding VMA21 deletions cause X-linked myopathy with excessive autophagy.</title>
        <authorList>
            <person name="Ruggieri A."/>
            <person name="Ramachandran N."/>
            <person name="Wang P."/>
            <person name="Haan E."/>
            <person name="Kneebone C."/>
            <person name="Manavis J."/>
            <person name="Morandi L."/>
            <person name="Moroni I."/>
            <person name="Blumbergs P."/>
            <person name="Mora M."/>
            <person name="Minassian B.A."/>
        </authorList>
    </citation>
    <scope>INVOLVEMENT IN MEAX</scope>
</reference>
<reference key="10">
    <citation type="journal article" date="2017" name="J. Exp. Med.">
        <title>Mutations in the X-linked ATP6AP2 cause a glycosylation disorder with autophagic defects.</title>
        <authorList>
            <person name="Rujano M.A."/>
            <person name="Cannata Serio M."/>
            <person name="Panasyuk G."/>
            <person name="Peanne R."/>
            <person name="Reunert J."/>
            <person name="Rymen D."/>
            <person name="Hauser V."/>
            <person name="Park J.H."/>
            <person name="Freisinger P."/>
            <person name="Souche E."/>
            <person name="Guida M.C."/>
            <person name="Maier E.M."/>
            <person name="Wada Y."/>
            <person name="Jaeger S."/>
            <person name="Krogan N.J."/>
            <person name="Kretz O."/>
            <person name="Nobre S."/>
            <person name="Garcia P."/>
            <person name="Quelhas D."/>
            <person name="Bird T.D."/>
            <person name="Raskind W.H."/>
            <person name="Schwake M."/>
            <person name="Duvet S."/>
            <person name="Foulquier F."/>
            <person name="Matthijs G."/>
            <person name="Marquardt T."/>
            <person name="Simons M."/>
        </authorList>
    </citation>
    <scope>INTERACTION WITH ATP6AP2</scope>
</reference>
<dbReference type="EMBL" id="AK096835">
    <property type="protein sequence ID" value="BAG53371.1"/>
    <property type="molecule type" value="mRNA"/>
</dbReference>
<dbReference type="EMBL" id="AF003627">
    <property type="status" value="NOT_ANNOTATED_CDS"/>
    <property type="molecule type" value="Genomic_DNA"/>
</dbReference>
<dbReference type="EMBL" id="BC103701">
    <property type="protein sequence ID" value="AAI03702.1"/>
    <property type="molecule type" value="mRNA"/>
</dbReference>
<dbReference type="EMBL" id="BC103702">
    <property type="protein sequence ID" value="AAI03703.1"/>
    <property type="molecule type" value="mRNA"/>
</dbReference>
<dbReference type="EMBL" id="BC105693">
    <property type="protein sequence ID" value="AAI05694.1"/>
    <property type="molecule type" value="mRNA"/>
</dbReference>
<dbReference type="EMBL" id="BC105694">
    <property type="protein sequence ID" value="AAI05695.1"/>
    <property type="molecule type" value="mRNA"/>
</dbReference>
<dbReference type="EMBL" id="BC110800">
    <property type="protein sequence ID" value="AAI10801.1"/>
    <property type="molecule type" value="mRNA"/>
</dbReference>
<dbReference type="CCDS" id="CCDS35430.1">
    <molecule id="Q3ZAQ7-1"/>
</dbReference>
<dbReference type="CCDS" id="CCDS87789.1">
    <molecule id="Q3ZAQ7-2"/>
</dbReference>
<dbReference type="RefSeq" id="NP_001017980.1">
    <molecule id="Q3ZAQ7-1"/>
    <property type="nucleotide sequence ID" value="NM_001017980.4"/>
</dbReference>
<dbReference type="RefSeq" id="NP_001350739.1">
    <molecule id="Q3ZAQ7-2"/>
    <property type="nucleotide sequence ID" value="NM_001363810.1"/>
</dbReference>
<dbReference type="RefSeq" id="XP_011529427.1">
    <property type="nucleotide sequence ID" value="XM_011531125.2"/>
</dbReference>
<dbReference type="SMR" id="Q3ZAQ7"/>
<dbReference type="BioGRID" id="128477">
    <property type="interactions" value="121"/>
</dbReference>
<dbReference type="FunCoup" id="Q3ZAQ7">
    <property type="interactions" value="1247"/>
</dbReference>
<dbReference type="IntAct" id="Q3ZAQ7">
    <property type="interactions" value="77"/>
</dbReference>
<dbReference type="MINT" id="Q3ZAQ7"/>
<dbReference type="STRING" id="9606.ENSP00000359386"/>
<dbReference type="iPTMnet" id="Q3ZAQ7"/>
<dbReference type="PhosphoSitePlus" id="Q3ZAQ7"/>
<dbReference type="BioMuta" id="VMA21"/>
<dbReference type="DMDM" id="121943063"/>
<dbReference type="jPOST" id="Q3ZAQ7"/>
<dbReference type="MassIVE" id="Q3ZAQ7"/>
<dbReference type="PaxDb" id="9606-ENSP00000333255"/>
<dbReference type="PeptideAtlas" id="Q3ZAQ7"/>
<dbReference type="ProteomicsDB" id="61901">
    <molecule id="Q3ZAQ7-1"/>
</dbReference>
<dbReference type="ProteomicsDB" id="61902">
    <molecule id="Q3ZAQ7-2"/>
</dbReference>
<dbReference type="Pumba" id="Q3ZAQ7"/>
<dbReference type="TopDownProteomics" id="Q3ZAQ7-1">
    <molecule id="Q3ZAQ7-1"/>
</dbReference>
<dbReference type="TopDownProteomics" id="Q3ZAQ7-2">
    <molecule id="Q3ZAQ7-2"/>
</dbReference>
<dbReference type="Antibodypedia" id="534">
    <property type="antibodies" value="81 antibodies from 22 providers"/>
</dbReference>
<dbReference type="DNASU" id="203547"/>
<dbReference type="Ensembl" id="ENST00000330374.7">
    <molecule id="Q3ZAQ7-1"/>
    <property type="protein sequence ID" value="ENSP00000333255.6"/>
    <property type="gene ID" value="ENSG00000160131.14"/>
</dbReference>
<dbReference type="Ensembl" id="ENST00000370361.5">
    <molecule id="Q3ZAQ7-2"/>
    <property type="protein sequence ID" value="ENSP00000359386.1"/>
    <property type="gene ID" value="ENSG00000160131.14"/>
</dbReference>
<dbReference type="GeneID" id="203547"/>
<dbReference type="KEGG" id="hsa:203547"/>
<dbReference type="MANE-Select" id="ENST00000330374.7">
    <property type="protein sequence ID" value="ENSP00000333255.6"/>
    <property type="RefSeq nucleotide sequence ID" value="NM_001017980.4"/>
    <property type="RefSeq protein sequence ID" value="NP_001017980.1"/>
</dbReference>
<dbReference type="UCSC" id="uc004feu.4">
    <molecule id="Q3ZAQ7-1"/>
    <property type="organism name" value="human"/>
</dbReference>
<dbReference type="AGR" id="HGNC:22082"/>
<dbReference type="CTD" id="203547"/>
<dbReference type="DisGeNET" id="203547"/>
<dbReference type="GeneCards" id="VMA21"/>
<dbReference type="HGNC" id="HGNC:22082">
    <property type="gene designation" value="VMA21"/>
</dbReference>
<dbReference type="HPA" id="ENSG00000160131">
    <property type="expression patterns" value="Low tissue specificity"/>
</dbReference>
<dbReference type="MalaCards" id="VMA21"/>
<dbReference type="MIM" id="300913">
    <property type="type" value="gene"/>
</dbReference>
<dbReference type="MIM" id="310440">
    <property type="type" value="phenotype"/>
</dbReference>
<dbReference type="neXtProt" id="NX_Q3ZAQ7"/>
<dbReference type="OpenTargets" id="ENSG00000160131"/>
<dbReference type="Orphanet" id="25980">
    <property type="disease" value="X-linked myopathy with excessive autophagy"/>
</dbReference>
<dbReference type="PharmGKB" id="PA164727498"/>
<dbReference type="VEuPathDB" id="HostDB:ENSG00000160131"/>
<dbReference type="eggNOG" id="KOG4783">
    <property type="taxonomic scope" value="Eukaryota"/>
</dbReference>
<dbReference type="GeneTree" id="ENSGT00390000017980"/>
<dbReference type="HOGENOM" id="CLU_143588_0_0_1"/>
<dbReference type="InParanoid" id="Q3ZAQ7"/>
<dbReference type="OMA" id="PYFRGNE"/>
<dbReference type="OrthoDB" id="160405at2759"/>
<dbReference type="PAN-GO" id="Q3ZAQ7">
    <property type="GO annotations" value="2 GO annotations based on evolutionary models"/>
</dbReference>
<dbReference type="PhylomeDB" id="Q3ZAQ7"/>
<dbReference type="TreeFam" id="TF314021"/>
<dbReference type="PathwayCommons" id="Q3ZAQ7"/>
<dbReference type="SignaLink" id="Q3ZAQ7"/>
<dbReference type="BioGRID-ORCS" id="203547">
    <property type="hits" value="137 hits in 791 CRISPR screens"/>
</dbReference>
<dbReference type="ChiTaRS" id="VMA21">
    <property type="organism name" value="human"/>
</dbReference>
<dbReference type="GenomeRNAi" id="203547"/>
<dbReference type="Pharos" id="Q3ZAQ7">
    <property type="development level" value="Tdark"/>
</dbReference>
<dbReference type="PRO" id="PR:Q3ZAQ7"/>
<dbReference type="Proteomes" id="UP000005640">
    <property type="component" value="Chromosome X"/>
</dbReference>
<dbReference type="RNAct" id="Q3ZAQ7">
    <property type="molecule type" value="protein"/>
</dbReference>
<dbReference type="Bgee" id="ENSG00000160131">
    <property type="expression patterns" value="Expressed in ileal mucosa and 188 other cell types or tissues"/>
</dbReference>
<dbReference type="GO" id="GO:0005789">
    <property type="term" value="C:endoplasmic reticulum membrane"/>
    <property type="evidence" value="ECO:0000318"/>
    <property type="project" value="GO_Central"/>
</dbReference>
<dbReference type="GO" id="GO:0033116">
    <property type="term" value="C:endoplasmic reticulum-Golgi intermediate compartment membrane"/>
    <property type="evidence" value="ECO:0007669"/>
    <property type="project" value="UniProtKB-SubCell"/>
</dbReference>
<dbReference type="GO" id="GO:0012507">
    <property type="term" value="C:ER to Golgi transport vesicle membrane"/>
    <property type="evidence" value="ECO:0007669"/>
    <property type="project" value="UniProtKB-SubCell"/>
</dbReference>
<dbReference type="GO" id="GO:0005764">
    <property type="term" value="C:lysosome"/>
    <property type="evidence" value="ECO:0000314"/>
    <property type="project" value="LIFEdb"/>
</dbReference>
<dbReference type="GO" id="GO:0043462">
    <property type="term" value="P:regulation of ATP-dependent activity"/>
    <property type="evidence" value="ECO:0000304"/>
    <property type="project" value="ParkinsonsUK-UCL"/>
</dbReference>
<dbReference type="GO" id="GO:0070072">
    <property type="term" value="P:vacuolar proton-transporting V-type ATPase complex assembly"/>
    <property type="evidence" value="ECO:0000318"/>
    <property type="project" value="GO_Central"/>
</dbReference>
<dbReference type="HAMAP" id="MF_03058">
    <property type="entry name" value="VMA21"/>
    <property type="match status" value="1"/>
</dbReference>
<dbReference type="InterPro" id="IPR019013">
    <property type="entry name" value="Vma21"/>
</dbReference>
<dbReference type="PANTHER" id="PTHR31792">
    <property type="entry name" value="VACUOLAR ATPASE ASSEMBLY INTEGRAL MEMBRANE PROTEIN VMA21"/>
    <property type="match status" value="1"/>
</dbReference>
<dbReference type="PANTHER" id="PTHR31792:SF3">
    <property type="entry name" value="VACUOLAR ATPASE ASSEMBLY INTEGRAL MEMBRANE PROTEIN VMA21"/>
    <property type="match status" value="1"/>
</dbReference>
<dbReference type="Pfam" id="PF09446">
    <property type="entry name" value="VMA21"/>
    <property type="match status" value="1"/>
</dbReference>
<protein>
    <recommendedName>
        <fullName evidence="1">Vacuolar ATPase assembly integral membrane protein VMA21</fullName>
    </recommendedName>
    <alternativeName>
        <fullName>Myopathy with excessive autophagy protein</fullName>
    </alternativeName>
</protein>
<evidence type="ECO:0000255" key="1">
    <source>
        <dbReference type="HAMAP-Rule" id="MF_03058"/>
    </source>
</evidence>
<evidence type="ECO:0000269" key="2">
    <source>
    </source>
</evidence>
<evidence type="ECO:0000269" key="3">
    <source>
    </source>
</evidence>
<evidence type="ECO:0000269" key="4">
    <source>
    </source>
</evidence>
<evidence type="ECO:0000269" key="5">
    <source>
    </source>
</evidence>
<evidence type="ECO:0000269" key="6">
    <source>
    </source>
</evidence>
<evidence type="ECO:0000305" key="7"/>
<evidence type="ECO:0000305" key="8">
    <source>
    </source>
</evidence>
<evidence type="ECO:0000305" key="9">
    <source>
    </source>
</evidence>
<sequence>MERPDKAALNALQPPEFRNESSLASTLKTLLFFTALMITVPIGLYFTTKSYIFEGALGMSNRDSYFYAAIVAVVAVHVVLALFVYVAWNEGSRQWREGKQD</sequence>